<comment type="function">
    <text evidence="1">Catalyzes the transfer of the enolpyruvyl moiety of phosphoenolpyruvate (PEP) to the 5-hydroxyl of shikimate-3-phosphate (S3P) to produce enolpyruvyl shikimate-3-phosphate and inorganic phosphate.</text>
</comment>
<comment type="catalytic activity">
    <reaction evidence="1">
        <text>3-phosphoshikimate + phosphoenolpyruvate = 5-O-(1-carboxyvinyl)-3-phosphoshikimate + phosphate</text>
        <dbReference type="Rhea" id="RHEA:21256"/>
        <dbReference type="ChEBI" id="CHEBI:43474"/>
        <dbReference type="ChEBI" id="CHEBI:57701"/>
        <dbReference type="ChEBI" id="CHEBI:58702"/>
        <dbReference type="ChEBI" id="CHEBI:145989"/>
        <dbReference type="EC" id="2.5.1.19"/>
    </reaction>
    <physiologicalReaction direction="left-to-right" evidence="1">
        <dbReference type="Rhea" id="RHEA:21257"/>
    </physiologicalReaction>
</comment>
<comment type="pathway">
    <text evidence="1">Metabolic intermediate biosynthesis; chorismate biosynthesis; chorismate from D-erythrose 4-phosphate and phosphoenolpyruvate: step 6/7.</text>
</comment>
<comment type="subunit">
    <text evidence="1">Monomer.</text>
</comment>
<comment type="subcellular location">
    <subcellularLocation>
        <location evidence="1">Cytoplasm</location>
    </subcellularLocation>
</comment>
<comment type="similarity">
    <text evidence="1 2">Belongs to the EPSP synthase family.</text>
</comment>
<accession>P52310</accession>
<organism>
    <name type="scientific">Histophilus somni</name>
    <name type="common">Haemophilus somnus</name>
    <dbReference type="NCBI Taxonomy" id="731"/>
    <lineage>
        <taxon>Bacteria</taxon>
        <taxon>Pseudomonadati</taxon>
        <taxon>Pseudomonadota</taxon>
        <taxon>Gammaproteobacteria</taxon>
        <taxon>Pasteurellales</taxon>
        <taxon>Pasteurellaceae</taxon>
        <taxon>Histophilus</taxon>
    </lineage>
</organism>
<sequence>MEKLTLSPISRIDGEINLPGSKSLSNRALLLAALAKGTTQVTNLLDSDDIRYMLNALKALGVNYQLSDDKTVCVVEGIGGAFQWQNGLSLFLGNAGTAMRPLAAALCLKGDTESEVILTGEPRMKERPIKHLVDALRQTGANIQYLENDGYPPLAIRNQGIFGGKVQIDGSISSQFLTALLMAAPLGEGDMEIEILGELVSKPYIDITPAMMKDFGINVDDYNYQRFLIKGKQYYISPQTYLVEGDASSASYFLAAAAIKGKVKVTGIGRNSIQGDRLFADVLAQMGAKVTWGEDFIQVEKSELKGIDMDMNHIPDAAMTIAITALFAQGETVIRNIYNWRVKETDRLTAIATELRKLGAEVEEGEDFIRIQPLALDKFKHAEIATYNDHRIAMCFSLIALSDTSVTILDPACTAKTFPTYFSEFEKISKNQ</sequence>
<proteinExistence type="inferred from homology"/>
<reference key="1">
    <citation type="submission" date="1996-01" db="EMBL/GenBank/DDBJ databases">
        <title>Cloning and sequencing of Haemophilus somnus aroA gene.</title>
        <authorList>
            <person name="Tatum F.M."/>
            <person name="Briggs R.E."/>
        </authorList>
    </citation>
    <scope>NUCLEOTIDE SEQUENCE [GENOMIC DNA]</scope>
</reference>
<dbReference type="EC" id="2.5.1.19" evidence="1"/>
<dbReference type="EMBL" id="L47538">
    <property type="protein sequence ID" value="AAA85091.1"/>
    <property type="molecule type" value="Genomic_DNA"/>
</dbReference>
<dbReference type="SMR" id="P52310"/>
<dbReference type="UniPathway" id="UPA00053">
    <property type="reaction ID" value="UER00089"/>
</dbReference>
<dbReference type="GO" id="GO:0005737">
    <property type="term" value="C:cytoplasm"/>
    <property type="evidence" value="ECO:0007669"/>
    <property type="project" value="UniProtKB-SubCell"/>
</dbReference>
<dbReference type="GO" id="GO:0003866">
    <property type="term" value="F:3-phosphoshikimate 1-carboxyvinyltransferase activity"/>
    <property type="evidence" value="ECO:0007669"/>
    <property type="project" value="UniProtKB-UniRule"/>
</dbReference>
<dbReference type="GO" id="GO:0008652">
    <property type="term" value="P:amino acid biosynthetic process"/>
    <property type="evidence" value="ECO:0007669"/>
    <property type="project" value="UniProtKB-KW"/>
</dbReference>
<dbReference type="GO" id="GO:0009073">
    <property type="term" value="P:aromatic amino acid family biosynthetic process"/>
    <property type="evidence" value="ECO:0007669"/>
    <property type="project" value="UniProtKB-KW"/>
</dbReference>
<dbReference type="GO" id="GO:0009423">
    <property type="term" value="P:chorismate biosynthetic process"/>
    <property type="evidence" value="ECO:0007669"/>
    <property type="project" value="UniProtKB-UniRule"/>
</dbReference>
<dbReference type="CDD" id="cd01556">
    <property type="entry name" value="EPSP_synthase"/>
    <property type="match status" value="1"/>
</dbReference>
<dbReference type="FunFam" id="3.65.10.10:FF:000003">
    <property type="entry name" value="3-phosphoshikimate 1-carboxyvinyltransferase"/>
    <property type="match status" value="1"/>
</dbReference>
<dbReference type="FunFam" id="3.65.10.10:FF:000004">
    <property type="entry name" value="3-phosphoshikimate 1-carboxyvinyltransferase"/>
    <property type="match status" value="1"/>
</dbReference>
<dbReference type="Gene3D" id="3.65.10.10">
    <property type="entry name" value="Enolpyruvate transferase domain"/>
    <property type="match status" value="2"/>
</dbReference>
<dbReference type="HAMAP" id="MF_00210">
    <property type="entry name" value="EPSP_synth"/>
    <property type="match status" value="1"/>
</dbReference>
<dbReference type="InterPro" id="IPR001986">
    <property type="entry name" value="Enolpyruvate_Tfrase_dom"/>
</dbReference>
<dbReference type="InterPro" id="IPR036968">
    <property type="entry name" value="Enolpyruvate_Tfrase_sf"/>
</dbReference>
<dbReference type="InterPro" id="IPR006264">
    <property type="entry name" value="EPSP_synthase"/>
</dbReference>
<dbReference type="InterPro" id="IPR023193">
    <property type="entry name" value="EPSP_synthase_CS"/>
</dbReference>
<dbReference type="InterPro" id="IPR013792">
    <property type="entry name" value="RNA3'P_cycl/enolpyr_Trfase_a/b"/>
</dbReference>
<dbReference type="NCBIfam" id="TIGR01356">
    <property type="entry name" value="aroA"/>
    <property type="match status" value="1"/>
</dbReference>
<dbReference type="PANTHER" id="PTHR21090">
    <property type="entry name" value="AROM/DEHYDROQUINATE SYNTHASE"/>
    <property type="match status" value="1"/>
</dbReference>
<dbReference type="PANTHER" id="PTHR21090:SF5">
    <property type="entry name" value="PENTAFUNCTIONAL AROM POLYPEPTIDE"/>
    <property type="match status" value="1"/>
</dbReference>
<dbReference type="Pfam" id="PF00275">
    <property type="entry name" value="EPSP_synthase"/>
    <property type="match status" value="1"/>
</dbReference>
<dbReference type="PIRSF" id="PIRSF000505">
    <property type="entry name" value="EPSPS"/>
    <property type="match status" value="1"/>
</dbReference>
<dbReference type="SUPFAM" id="SSF55205">
    <property type="entry name" value="EPT/RTPC-like"/>
    <property type="match status" value="1"/>
</dbReference>
<dbReference type="PROSITE" id="PS00104">
    <property type="entry name" value="EPSP_SYNTHASE_1"/>
    <property type="match status" value="1"/>
</dbReference>
<dbReference type="PROSITE" id="PS00885">
    <property type="entry name" value="EPSP_SYNTHASE_2"/>
    <property type="match status" value="1"/>
</dbReference>
<feature type="chain" id="PRO_0000088259" description="3-phosphoshikimate 1-carboxyvinyltransferase">
    <location>
        <begin position="1"/>
        <end position="432"/>
    </location>
</feature>
<feature type="active site" description="Proton acceptor" evidence="1">
    <location>
        <position position="316"/>
    </location>
</feature>
<feature type="binding site" evidence="1">
    <location>
        <position position="22"/>
    </location>
    <ligand>
        <name>3-phosphoshikimate</name>
        <dbReference type="ChEBI" id="CHEBI:145989"/>
    </ligand>
</feature>
<feature type="binding site" evidence="1">
    <location>
        <position position="22"/>
    </location>
    <ligand>
        <name>phosphoenolpyruvate</name>
        <dbReference type="ChEBI" id="CHEBI:58702"/>
    </ligand>
</feature>
<feature type="binding site" evidence="1">
    <location>
        <position position="23"/>
    </location>
    <ligand>
        <name>3-phosphoshikimate</name>
        <dbReference type="ChEBI" id="CHEBI:145989"/>
    </ligand>
</feature>
<feature type="binding site" evidence="1">
    <location>
        <position position="27"/>
    </location>
    <ligand>
        <name>3-phosphoshikimate</name>
        <dbReference type="ChEBI" id="CHEBI:145989"/>
    </ligand>
</feature>
<feature type="binding site" evidence="1">
    <location>
        <position position="96"/>
    </location>
    <ligand>
        <name>phosphoenolpyruvate</name>
        <dbReference type="ChEBI" id="CHEBI:58702"/>
    </ligand>
</feature>
<feature type="binding site" evidence="1">
    <location>
        <position position="127"/>
    </location>
    <ligand>
        <name>phosphoenolpyruvate</name>
        <dbReference type="ChEBI" id="CHEBI:58702"/>
    </ligand>
</feature>
<feature type="binding site" evidence="1">
    <location>
        <position position="173"/>
    </location>
    <ligand>
        <name>3-phosphoshikimate</name>
        <dbReference type="ChEBI" id="CHEBI:145989"/>
    </ligand>
</feature>
<feature type="binding site" evidence="1">
    <location>
        <position position="174"/>
    </location>
    <ligand>
        <name>3-phosphoshikimate</name>
        <dbReference type="ChEBI" id="CHEBI:145989"/>
    </ligand>
</feature>
<feature type="binding site" evidence="1">
    <location>
        <position position="175"/>
    </location>
    <ligand>
        <name>3-phosphoshikimate</name>
        <dbReference type="ChEBI" id="CHEBI:145989"/>
    </ligand>
</feature>
<feature type="binding site" evidence="1">
    <location>
        <position position="175"/>
    </location>
    <ligand>
        <name>phosphoenolpyruvate</name>
        <dbReference type="ChEBI" id="CHEBI:58702"/>
    </ligand>
</feature>
<feature type="binding site" evidence="1">
    <location>
        <position position="201"/>
    </location>
    <ligand>
        <name>3-phosphoshikimate</name>
        <dbReference type="ChEBI" id="CHEBI:145989"/>
    </ligand>
</feature>
<feature type="binding site" evidence="1">
    <location>
        <position position="316"/>
    </location>
    <ligand>
        <name>3-phosphoshikimate</name>
        <dbReference type="ChEBI" id="CHEBI:145989"/>
    </ligand>
</feature>
<feature type="binding site" evidence="1">
    <location>
        <position position="339"/>
    </location>
    <ligand>
        <name>3-phosphoshikimate</name>
        <dbReference type="ChEBI" id="CHEBI:145989"/>
    </ligand>
</feature>
<feature type="binding site" evidence="1">
    <location>
        <position position="343"/>
    </location>
    <ligand>
        <name>3-phosphoshikimate</name>
        <dbReference type="ChEBI" id="CHEBI:145989"/>
    </ligand>
</feature>
<feature type="binding site" evidence="1">
    <location>
        <position position="347"/>
    </location>
    <ligand>
        <name>phosphoenolpyruvate</name>
        <dbReference type="ChEBI" id="CHEBI:58702"/>
    </ligand>
</feature>
<feature type="binding site" evidence="1">
    <location>
        <position position="391"/>
    </location>
    <ligand>
        <name>phosphoenolpyruvate</name>
        <dbReference type="ChEBI" id="CHEBI:58702"/>
    </ligand>
</feature>
<feature type="binding site" evidence="1">
    <location>
        <position position="416"/>
    </location>
    <ligand>
        <name>phosphoenolpyruvate</name>
        <dbReference type="ChEBI" id="CHEBI:58702"/>
    </ligand>
</feature>
<keyword id="KW-0028">Amino-acid biosynthesis</keyword>
<keyword id="KW-0057">Aromatic amino acid biosynthesis</keyword>
<keyword id="KW-0963">Cytoplasm</keyword>
<keyword id="KW-0808">Transferase</keyword>
<evidence type="ECO:0000255" key="1">
    <source>
        <dbReference type="HAMAP-Rule" id="MF_00210"/>
    </source>
</evidence>
<evidence type="ECO:0000305" key="2"/>
<gene>
    <name evidence="1" type="primary">aroA</name>
</gene>
<protein>
    <recommendedName>
        <fullName evidence="1">3-phosphoshikimate 1-carboxyvinyltransferase</fullName>
        <ecNumber evidence="1">2.5.1.19</ecNumber>
    </recommendedName>
    <alternativeName>
        <fullName evidence="1">5-enolpyruvylshikimate-3-phosphate synthase</fullName>
        <shortName evidence="1">EPSP synthase</shortName>
        <shortName evidence="1">EPSPS</shortName>
    </alternativeName>
</protein>
<name>AROA_HISSO</name>